<keyword id="KW-0249">Electron transport</keyword>
<keyword id="KW-0349">Heme</keyword>
<keyword id="KW-0408">Iron</keyword>
<keyword id="KW-0472">Membrane</keyword>
<keyword id="KW-0479">Metal-binding</keyword>
<keyword id="KW-0496">Mitochondrion</keyword>
<keyword id="KW-0999">Mitochondrion inner membrane</keyword>
<keyword id="KW-1185">Reference proteome</keyword>
<keyword id="KW-0679">Respiratory chain</keyword>
<keyword id="KW-0812">Transmembrane</keyword>
<keyword id="KW-1133">Transmembrane helix</keyword>
<keyword id="KW-0813">Transport</keyword>
<keyword id="KW-0830">Ubiquinone</keyword>
<geneLocation type="mitochondrion"/>
<gene>
    <name type="primary">COB</name>
    <name type="synonym">COB1</name>
    <name type="synonym">CYTB</name>
    <name type="ordered locus">AMI008W</name>
    <name type="ORF">AgCOB1</name>
</gene>
<accession>P62513</accession>
<accession>Q75G37</accession>
<dbReference type="EMBL" id="AE016821">
    <property type="protein sequence ID" value="AAS50175.1"/>
    <property type="molecule type" value="Genomic_DNA"/>
</dbReference>
<dbReference type="RefSeq" id="NP_987085.1">
    <property type="nucleotide sequence ID" value="NC_005789.1"/>
</dbReference>
<dbReference type="SMR" id="P62513"/>
<dbReference type="FunCoup" id="P62513">
    <property type="interactions" value="654"/>
</dbReference>
<dbReference type="STRING" id="284811.P62513"/>
<dbReference type="EnsemblFungi" id="AAS50175">
    <property type="protein sequence ID" value="AAS50175"/>
    <property type="gene ID" value="AGOS_AMI008W"/>
</dbReference>
<dbReference type="GeneID" id="2760767"/>
<dbReference type="KEGG" id="ago:AGOS_AMI008W"/>
<dbReference type="eggNOG" id="KOG4663">
    <property type="taxonomic scope" value="Eukaryota"/>
</dbReference>
<dbReference type="HOGENOM" id="CLU_031114_3_0_1"/>
<dbReference type="InParanoid" id="P62513"/>
<dbReference type="OMA" id="NISAWWN"/>
<dbReference type="OrthoDB" id="244at2759"/>
<dbReference type="Proteomes" id="UP000000591">
    <property type="component" value="Mitochondrion"/>
</dbReference>
<dbReference type="GO" id="GO:0016020">
    <property type="term" value="C:membrane"/>
    <property type="evidence" value="ECO:0000318"/>
    <property type="project" value="GO_Central"/>
</dbReference>
<dbReference type="GO" id="GO:0005743">
    <property type="term" value="C:mitochondrial inner membrane"/>
    <property type="evidence" value="ECO:0007669"/>
    <property type="project" value="UniProtKB-SubCell"/>
</dbReference>
<dbReference type="GO" id="GO:0045275">
    <property type="term" value="C:respiratory chain complex III"/>
    <property type="evidence" value="ECO:0000318"/>
    <property type="project" value="GO_Central"/>
</dbReference>
<dbReference type="GO" id="GO:0046872">
    <property type="term" value="F:metal ion binding"/>
    <property type="evidence" value="ECO:0007669"/>
    <property type="project" value="UniProtKB-KW"/>
</dbReference>
<dbReference type="GO" id="GO:0008121">
    <property type="term" value="F:ubiquinol-cytochrome-c reductase activity"/>
    <property type="evidence" value="ECO:0007669"/>
    <property type="project" value="InterPro"/>
</dbReference>
<dbReference type="GO" id="GO:0006122">
    <property type="term" value="P:mitochondrial electron transport, ubiquinol to cytochrome c"/>
    <property type="evidence" value="ECO:0000318"/>
    <property type="project" value="GO_Central"/>
</dbReference>
<dbReference type="CDD" id="cd00290">
    <property type="entry name" value="cytochrome_b_C"/>
    <property type="match status" value="1"/>
</dbReference>
<dbReference type="CDD" id="cd00284">
    <property type="entry name" value="Cytochrome_b_N"/>
    <property type="match status" value="1"/>
</dbReference>
<dbReference type="FunFam" id="1.20.810.10:FF:000002">
    <property type="entry name" value="Cytochrome b"/>
    <property type="match status" value="1"/>
</dbReference>
<dbReference type="Gene3D" id="1.20.810.10">
    <property type="entry name" value="Cytochrome Bc1 Complex, Chain C"/>
    <property type="match status" value="1"/>
</dbReference>
<dbReference type="InterPro" id="IPR005798">
    <property type="entry name" value="Cyt_b/b6_C"/>
</dbReference>
<dbReference type="InterPro" id="IPR036150">
    <property type="entry name" value="Cyt_b/b6_C_sf"/>
</dbReference>
<dbReference type="InterPro" id="IPR005797">
    <property type="entry name" value="Cyt_b/b6_N"/>
</dbReference>
<dbReference type="InterPro" id="IPR027387">
    <property type="entry name" value="Cytb/b6-like_sf"/>
</dbReference>
<dbReference type="InterPro" id="IPR030689">
    <property type="entry name" value="Cytochrome_b"/>
</dbReference>
<dbReference type="InterPro" id="IPR048260">
    <property type="entry name" value="Cytochrome_b_C_euk/bac"/>
</dbReference>
<dbReference type="InterPro" id="IPR048259">
    <property type="entry name" value="Cytochrome_b_N_euk/bac"/>
</dbReference>
<dbReference type="InterPro" id="IPR016174">
    <property type="entry name" value="Di-haem_cyt_TM"/>
</dbReference>
<dbReference type="PANTHER" id="PTHR19271">
    <property type="entry name" value="CYTOCHROME B"/>
    <property type="match status" value="1"/>
</dbReference>
<dbReference type="PANTHER" id="PTHR19271:SF16">
    <property type="entry name" value="CYTOCHROME B"/>
    <property type="match status" value="1"/>
</dbReference>
<dbReference type="Pfam" id="PF00032">
    <property type="entry name" value="Cytochrom_B_C"/>
    <property type="match status" value="1"/>
</dbReference>
<dbReference type="Pfam" id="PF00033">
    <property type="entry name" value="Cytochrome_B"/>
    <property type="match status" value="1"/>
</dbReference>
<dbReference type="PIRSF" id="PIRSF038885">
    <property type="entry name" value="COB"/>
    <property type="match status" value="1"/>
</dbReference>
<dbReference type="SUPFAM" id="SSF81648">
    <property type="entry name" value="a domain/subunit of cytochrome bc1 complex (Ubiquinol-cytochrome c reductase)"/>
    <property type="match status" value="1"/>
</dbReference>
<dbReference type="SUPFAM" id="SSF81342">
    <property type="entry name" value="Transmembrane di-heme cytochromes"/>
    <property type="match status" value="1"/>
</dbReference>
<dbReference type="PROSITE" id="PS51003">
    <property type="entry name" value="CYTB_CTER"/>
    <property type="match status" value="1"/>
</dbReference>
<dbReference type="PROSITE" id="PS51002">
    <property type="entry name" value="CYTB_NTER"/>
    <property type="match status" value="1"/>
</dbReference>
<protein>
    <recommendedName>
        <fullName>Cytochrome b</fullName>
    </recommendedName>
    <alternativeName>
        <fullName>Complex III subunit 3</fullName>
    </alternativeName>
    <alternativeName>
        <fullName>Complex III subunit III</fullName>
    </alternativeName>
    <alternativeName>
        <fullName>Cytochrome b-c1 complex subunit 3</fullName>
    </alternativeName>
    <alternativeName>
        <fullName>Ubiquinol-cytochrome-c reductase complex cytochrome b subunit</fullName>
    </alternativeName>
</protein>
<proteinExistence type="inferred from homology"/>
<comment type="function">
    <text evidence="3">Component of the ubiquinol-cytochrome c reductase complex (complex III or cytochrome b-c1 complex) that is part of the mitochondrial respiratory chain. The b-c1 complex mediates electron transfer from ubiquinol to cytochrome c. Contributes to the generation of a proton gradient across the mitochondrial membrane that is then used for ATP synthesis.</text>
</comment>
<comment type="cofactor">
    <cofactor evidence="3">
        <name>heme b</name>
        <dbReference type="ChEBI" id="CHEBI:60344"/>
    </cofactor>
    <text evidence="3">Binds 2 heme b groups non-covalently.</text>
</comment>
<comment type="subunit">
    <text evidence="3">Fungal cytochrome b-c1 complex contains 10 subunits; 3 respiratory subunits, 2 core proteins and 5 low-molecular weight proteins. Cytochrome b-c1 complex is a homodimer.</text>
</comment>
<comment type="subcellular location">
    <subcellularLocation>
        <location evidence="3">Mitochondrion inner membrane</location>
        <topology evidence="3">Multi-pass membrane protein</topology>
    </subcellularLocation>
</comment>
<comment type="miscellaneous">
    <text evidence="1">Heme 1 (or BL or b562) is low-potential and absorbs at about 562 nm, and heme 2 (or BH or b566) is high-potential and absorbs at about 566 nm.</text>
</comment>
<comment type="similarity">
    <text evidence="4 5">Belongs to the cytochrome b family.</text>
</comment>
<comment type="caution">
    <text evidence="3">The protein contains only eight transmembrane helices, not nine as predicted by bioinformatics tools.</text>
</comment>
<organism>
    <name type="scientific">Eremothecium gossypii (strain ATCC 10895 / CBS 109.51 / FGSC 9923 / NRRL Y-1056)</name>
    <name type="common">Yeast</name>
    <name type="synonym">Ashbya gossypii</name>
    <dbReference type="NCBI Taxonomy" id="284811"/>
    <lineage>
        <taxon>Eukaryota</taxon>
        <taxon>Fungi</taxon>
        <taxon>Dikarya</taxon>
        <taxon>Ascomycota</taxon>
        <taxon>Saccharomycotina</taxon>
        <taxon>Saccharomycetes</taxon>
        <taxon>Saccharomycetales</taxon>
        <taxon>Saccharomycetaceae</taxon>
        <taxon>Eremothecium</taxon>
    </lineage>
</organism>
<feature type="chain" id="PRO_0000061734" description="Cytochrome b">
    <location>
        <begin position="1"/>
        <end position="384"/>
    </location>
</feature>
<feature type="transmembrane region" description="Helical" evidence="3">
    <location>
        <begin position="32"/>
        <end position="52"/>
    </location>
</feature>
<feature type="transmembrane region" description="Helical" evidence="3">
    <location>
        <begin position="76"/>
        <end position="98"/>
    </location>
</feature>
<feature type="transmembrane region" description="Helical" evidence="3">
    <location>
        <begin position="113"/>
        <end position="133"/>
    </location>
</feature>
<feature type="transmembrane region" description="Helical" evidence="3">
    <location>
        <begin position="179"/>
        <end position="199"/>
    </location>
</feature>
<feature type="transmembrane region" description="Helical" evidence="3">
    <location>
        <begin position="225"/>
        <end position="245"/>
    </location>
</feature>
<feature type="transmembrane region" description="Helical" evidence="3">
    <location>
        <begin position="289"/>
        <end position="309"/>
    </location>
</feature>
<feature type="transmembrane region" description="Helical" evidence="3">
    <location>
        <begin position="321"/>
        <end position="341"/>
    </location>
</feature>
<feature type="transmembrane region" description="Helical" evidence="3">
    <location>
        <begin position="348"/>
        <end position="368"/>
    </location>
</feature>
<feature type="binding site" description="axial binding residue" evidence="5">
    <location>
        <position position="82"/>
    </location>
    <ligand>
        <name>heme b</name>
        <dbReference type="ChEBI" id="CHEBI:60344"/>
        <label>b562</label>
    </ligand>
    <ligandPart>
        <name>Fe</name>
        <dbReference type="ChEBI" id="CHEBI:18248"/>
    </ligandPart>
</feature>
<feature type="binding site" description="axial binding residue" evidence="5">
    <location>
        <position position="96"/>
    </location>
    <ligand>
        <name>heme b</name>
        <dbReference type="ChEBI" id="CHEBI:60344"/>
        <label>b566</label>
    </ligand>
    <ligandPart>
        <name>Fe</name>
        <dbReference type="ChEBI" id="CHEBI:18248"/>
    </ligandPart>
</feature>
<feature type="binding site" description="axial binding residue" evidence="5">
    <location>
        <position position="183"/>
    </location>
    <ligand>
        <name>heme b</name>
        <dbReference type="ChEBI" id="CHEBI:60344"/>
        <label>b562</label>
    </ligand>
    <ligandPart>
        <name>Fe</name>
        <dbReference type="ChEBI" id="CHEBI:18248"/>
    </ligandPart>
</feature>
<feature type="binding site" description="axial binding residue" evidence="5">
    <location>
        <position position="197"/>
    </location>
    <ligand>
        <name>heme b</name>
        <dbReference type="ChEBI" id="CHEBI:60344"/>
        <label>b566</label>
    </ligand>
    <ligandPart>
        <name>Fe</name>
        <dbReference type="ChEBI" id="CHEBI:18248"/>
    </ligandPart>
</feature>
<feature type="binding site" evidence="2">
    <location>
        <position position="202"/>
    </location>
    <ligand>
        <name>a ubiquinone</name>
        <dbReference type="ChEBI" id="CHEBI:16389"/>
    </ligand>
</feature>
<sequence length="384" mass="43849">MAYRKSNLYLNLVNSYVIDSPQPSSINYWWNLGSLLGLCLVIQITTGIFLAMHYSSNIELAFSSVEHIMRDVQTGWLIRYMHTNGASFFFICMYIHIGKGLYYGSYKSPRVIVWTVGVIIFILTMAAAFLGYCLVYGQMSHWGATVITNLFSAIPFIGNDIVTWLWGSFSVSNPTIMRFFTFHYLVPFIIAAMVIMHLMTLHVHGSSNPLGITGNLDRLPMHGYFIFKDLVTVFVFMIFFSLFVFFSPNTLGHPDNYIPGNPLVTPASIVPEWYLLPFYTILRSIPDKLGGVITMFGTILVLLMLPITDRSIIRGNTFKTLSKFFFFLFITNFILLGKLGECHVEVPFILMGQICTFIYFAYFLILVPIISMIENILFYLTNKK</sequence>
<name>CYB_EREGS</name>
<evidence type="ECO:0000250" key="1"/>
<evidence type="ECO:0000250" key="2">
    <source>
        <dbReference type="UniProtKB" id="P00157"/>
    </source>
</evidence>
<evidence type="ECO:0000250" key="3">
    <source>
        <dbReference type="UniProtKB" id="P00163"/>
    </source>
</evidence>
<evidence type="ECO:0000255" key="4">
    <source>
        <dbReference type="PROSITE-ProRule" id="PRU00967"/>
    </source>
</evidence>
<evidence type="ECO:0000255" key="5">
    <source>
        <dbReference type="PROSITE-ProRule" id="PRU00968"/>
    </source>
</evidence>
<reference key="1">
    <citation type="journal article" date="2004" name="Science">
        <title>The Ashbya gossypii genome as a tool for mapping the ancient Saccharomyces cerevisiae genome.</title>
        <authorList>
            <person name="Dietrich F.S."/>
            <person name="Voegeli S."/>
            <person name="Brachat S."/>
            <person name="Lerch A."/>
            <person name="Gates K."/>
            <person name="Steiner S."/>
            <person name="Mohr C."/>
            <person name="Poehlmann R."/>
            <person name="Luedi P."/>
            <person name="Choi S."/>
            <person name="Wing R.A."/>
            <person name="Flavier A."/>
            <person name="Gaffney T.D."/>
            <person name="Philippsen P."/>
        </authorList>
    </citation>
    <scope>NUCLEOTIDE SEQUENCE [LARGE SCALE GENOMIC DNA]</scope>
    <source>
        <strain>ATCC 10895 / CBS 109.51 / FGSC 9923 / NRRL Y-1056</strain>
    </source>
</reference>
<reference key="2">
    <citation type="journal article" date="2013" name="G3 (Bethesda)">
        <title>Genomes of Ashbya fungi isolated from insects reveal four mating-type loci, numerous translocations, lack of transposons, and distinct gene duplications.</title>
        <authorList>
            <person name="Dietrich F.S."/>
            <person name="Voegeli S."/>
            <person name="Kuo S."/>
            <person name="Philippsen P."/>
        </authorList>
    </citation>
    <scope>GENOME REANNOTATION</scope>
    <source>
        <strain>ATCC 10895 / CBS 109.51 / FGSC 9923 / NRRL Y-1056</strain>
    </source>
</reference>